<feature type="chain" id="PRO_0000047589" description="Zinc finger protein 440">
    <location>
        <begin position="1"/>
        <end position="595"/>
    </location>
</feature>
<feature type="domain" description="KRAB" evidence="2">
    <location>
        <begin position="4"/>
        <end position="86"/>
    </location>
</feature>
<feature type="zinc finger region" description="C2H2-type 1; degenerate" evidence="1">
    <location>
        <begin position="144"/>
        <end position="166"/>
    </location>
</feature>
<feature type="zinc finger region" description="C2H2-type 2" evidence="1">
    <location>
        <begin position="172"/>
        <end position="194"/>
    </location>
</feature>
<feature type="zinc finger region" description="C2H2-type 3" evidence="1">
    <location>
        <begin position="200"/>
        <end position="222"/>
    </location>
</feature>
<feature type="zinc finger region" description="C2H2-type 4" evidence="1">
    <location>
        <begin position="228"/>
        <end position="250"/>
    </location>
</feature>
<feature type="zinc finger region" description="C2H2-type 5; degenerate" evidence="1">
    <location>
        <begin position="256"/>
        <end position="278"/>
    </location>
</feature>
<feature type="zinc finger region" description="C2H2-type 6" evidence="1">
    <location>
        <begin position="284"/>
        <end position="306"/>
    </location>
</feature>
<feature type="zinc finger region" description="C2H2-type 7" evidence="1">
    <location>
        <begin position="312"/>
        <end position="334"/>
    </location>
</feature>
<feature type="zinc finger region" description="C2H2-type 8" evidence="1">
    <location>
        <begin position="340"/>
        <end position="362"/>
    </location>
</feature>
<feature type="zinc finger region" description="C2H2-type 9" evidence="1">
    <location>
        <begin position="368"/>
        <end position="390"/>
    </location>
</feature>
<feature type="zinc finger region" description="C2H2-type 10" evidence="1">
    <location>
        <begin position="396"/>
        <end position="418"/>
    </location>
</feature>
<feature type="zinc finger region" description="C2H2-type 11" evidence="1">
    <location>
        <begin position="424"/>
        <end position="448"/>
    </location>
</feature>
<feature type="zinc finger region" description="C2H2-type 12" evidence="1">
    <location>
        <begin position="458"/>
        <end position="480"/>
    </location>
</feature>
<feature type="sequence variant" id="VAR_059915" description="In dbSNP:rs424132.">
    <original>L</original>
    <variation>I</variation>
    <location>
        <position position="43"/>
    </location>
</feature>
<feature type="sequence variant" id="VAR_052828" description="In dbSNP:rs448446.">
    <original>P</original>
    <variation>R</variation>
    <location>
        <position position="88"/>
    </location>
</feature>
<feature type="sequence variant" id="VAR_059916" description="In dbSNP:rs427880.">
    <original>N</original>
    <variation>S</variation>
    <location>
        <position position="124"/>
    </location>
</feature>
<feature type="sequence variant" id="VAR_052829" description="In dbSNP:rs400106." evidence="3">
    <original>S</original>
    <variation>N</variation>
    <location>
        <position position="569"/>
    </location>
</feature>
<feature type="sequence conflict" description="In Ref. 1; BAC04510." evidence="4" ref="1">
    <original>L</original>
    <variation>M</variation>
    <location>
        <position position="40"/>
    </location>
</feature>
<evidence type="ECO:0000255" key="1">
    <source>
        <dbReference type="PROSITE-ProRule" id="PRU00042"/>
    </source>
</evidence>
<evidence type="ECO:0000255" key="2">
    <source>
        <dbReference type="PROSITE-ProRule" id="PRU00119"/>
    </source>
</evidence>
<evidence type="ECO:0000269" key="3">
    <source>
    </source>
</evidence>
<evidence type="ECO:0000305" key="4"/>
<dbReference type="EMBL" id="BC035760">
    <property type="protein sequence ID" value="AAH35760.1"/>
    <property type="molecule type" value="mRNA"/>
</dbReference>
<dbReference type="EMBL" id="AK095252">
    <property type="protein sequence ID" value="BAC04510.1"/>
    <property type="molecule type" value="mRNA"/>
</dbReference>
<dbReference type="CCDS" id="CCDS42503.1"/>
<dbReference type="RefSeq" id="NP_689570.2">
    <property type="nucleotide sequence ID" value="NM_152357.3"/>
</dbReference>
<dbReference type="SMR" id="Q8IYI8"/>
<dbReference type="BioGRID" id="125953">
    <property type="interactions" value="40"/>
</dbReference>
<dbReference type="FunCoup" id="Q8IYI8">
    <property type="interactions" value="12"/>
</dbReference>
<dbReference type="IntAct" id="Q8IYI8">
    <property type="interactions" value="34"/>
</dbReference>
<dbReference type="MINT" id="Q8IYI8"/>
<dbReference type="STRING" id="9606.ENSP00000305373"/>
<dbReference type="iPTMnet" id="Q8IYI8"/>
<dbReference type="PhosphoSitePlus" id="Q8IYI8"/>
<dbReference type="BioMuta" id="ZNF440"/>
<dbReference type="DMDM" id="30580626"/>
<dbReference type="jPOST" id="Q8IYI8"/>
<dbReference type="MassIVE" id="Q8IYI8"/>
<dbReference type="PaxDb" id="9606-ENSP00000305373"/>
<dbReference type="PeptideAtlas" id="Q8IYI8"/>
<dbReference type="ProteomicsDB" id="71181"/>
<dbReference type="Antibodypedia" id="6949">
    <property type="antibodies" value="87 antibodies from 19 providers"/>
</dbReference>
<dbReference type="DNASU" id="126070"/>
<dbReference type="Ensembl" id="ENST00000304060.10">
    <property type="protein sequence ID" value="ENSP00000305373.5"/>
    <property type="gene ID" value="ENSG00000171295.13"/>
</dbReference>
<dbReference type="GeneID" id="126070"/>
<dbReference type="KEGG" id="hsa:126070"/>
<dbReference type="MANE-Select" id="ENST00000304060.10">
    <property type="protein sequence ID" value="ENSP00000305373.5"/>
    <property type="RefSeq nucleotide sequence ID" value="NM_152357.3"/>
    <property type="RefSeq protein sequence ID" value="NP_689570.2"/>
</dbReference>
<dbReference type="UCSC" id="uc002msp.2">
    <property type="organism name" value="human"/>
</dbReference>
<dbReference type="AGR" id="HGNC:20874"/>
<dbReference type="CTD" id="126070"/>
<dbReference type="DisGeNET" id="126070"/>
<dbReference type="GeneCards" id="ZNF440"/>
<dbReference type="HGNC" id="HGNC:20874">
    <property type="gene designation" value="ZNF440"/>
</dbReference>
<dbReference type="HPA" id="ENSG00000171295">
    <property type="expression patterns" value="Low tissue specificity"/>
</dbReference>
<dbReference type="neXtProt" id="NX_Q8IYI8"/>
<dbReference type="OpenTargets" id="ENSG00000171295"/>
<dbReference type="PharmGKB" id="PA134917447"/>
<dbReference type="VEuPathDB" id="HostDB:ENSG00000171295"/>
<dbReference type="eggNOG" id="KOG1721">
    <property type="taxonomic scope" value="Eukaryota"/>
</dbReference>
<dbReference type="GeneTree" id="ENSGT00940000163273"/>
<dbReference type="HOGENOM" id="CLU_002678_44_5_1"/>
<dbReference type="InParanoid" id="Q8IYI8"/>
<dbReference type="OMA" id="FMKGHKH"/>
<dbReference type="OrthoDB" id="9517983at2759"/>
<dbReference type="PAN-GO" id="Q8IYI8">
    <property type="GO annotations" value="3 GO annotations based on evolutionary models"/>
</dbReference>
<dbReference type="PhylomeDB" id="Q8IYI8"/>
<dbReference type="TreeFam" id="TF338854"/>
<dbReference type="PathwayCommons" id="Q8IYI8"/>
<dbReference type="Reactome" id="R-HSA-212436">
    <property type="pathway name" value="Generic Transcription Pathway"/>
</dbReference>
<dbReference type="SignaLink" id="Q8IYI8"/>
<dbReference type="BioGRID-ORCS" id="126070">
    <property type="hits" value="8 hits in 1174 CRISPR screens"/>
</dbReference>
<dbReference type="ChiTaRS" id="ZNF440">
    <property type="organism name" value="human"/>
</dbReference>
<dbReference type="GenomeRNAi" id="126070"/>
<dbReference type="Pharos" id="Q8IYI8">
    <property type="development level" value="Tdark"/>
</dbReference>
<dbReference type="PRO" id="PR:Q8IYI8"/>
<dbReference type="Proteomes" id="UP000005640">
    <property type="component" value="Chromosome 19"/>
</dbReference>
<dbReference type="RNAct" id="Q8IYI8">
    <property type="molecule type" value="protein"/>
</dbReference>
<dbReference type="Bgee" id="ENSG00000171295">
    <property type="expression patterns" value="Expressed in buccal mucosa cell and 132 other cell types or tissues"/>
</dbReference>
<dbReference type="ExpressionAtlas" id="Q8IYI8">
    <property type="expression patterns" value="baseline and differential"/>
</dbReference>
<dbReference type="GO" id="GO:0005634">
    <property type="term" value="C:nucleus"/>
    <property type="evidence" value="ECO:0000318"/>
    <property type="project" value="GO_Central"/>
</dbReference>
<dbReference type="GO" id="GO:0000981">
    <property type="term" value="F:DNA-binding transcription factor activity, RNA polymerase II-specific"/>
    <property type="evidence" value="ECO:0000318"/>
    <property type="project" value="GO_Central"/>
</dbReference>
<dbReference type="GO" id="GO:0000977">
    <property type="term" value="F:RNA polymerase II transcription regulatory region sequence-specific DNA binding"/>
    <property type="evidence" value="ECO:0000318"/>
    <property type="project" value="GO_Central"/>
</dbReference>
<dbReference type="GO" id="GO:0008270">
    <property type="term" value="F:zinc ion binding"/>
    <property type="evidence" value="ECO:0007669"/>
    <property type="project" value="UniProtKB-KW"/>
</dbReference>
<dbReference type="GO" id="GO:0006357">
    <property type="term" value="P:regulation of transcription by RNA polymerase II"/>
    <property type="evidence" value="ECO:0000318"/>
    <property type="project" value="GO_Central"/>
</dbReference>
<dbReference type="CDD" id="cd07765">
    <property type="entry name" value="KRAB_A-box"/>
    <property type="match status" value="1"/>
</dbReference>
<dbReference type="FunFam" id="3.30.160.60:FF:000240">
    <property type="entry name" value="Zinc finger protein 250"/>
    <property type="match status" value="1"/>
</dbReference>
<dbReference type="FunFam" id="3.30.160.60:FF:000184">
    <property type="entry name" value="Zinc finger protein 333"/>
    <property type="match status" value="5"/>
</dbReference>
<dbReference type="FunFam" id="3.30.160.60:FF:002254">
    <property type="entry name" value="Zinc finger protein 540"/>
    <property type="match status" value="2"/>
</dbReference>
<dbReference type="FunFam" id="3.30.160.60:FF:001544">
    <property type="entry name" value="Zinc finger protein 69"/>
    <property type="match status" value="1"/>
</dbReference>
<dbReference type="FunFam" id="3.30.160.60:FF:002288">
    <property type="entry name" value="Zinc finger protein 700"/>
    <property type="match status" value="1"/>
</dbReference>
<dbReference type="Gene3D" id="6.10.140.140">
    <property type="match status" value="1"/>
</dbReference>
<dbReference type="Gene3D" id="3.30.160.60">
    <property type="entry name" value="Classic Zinc Finger"/>
    <property type="match status" value="11"/>
</dbReference>
<dbReference type="InterPro" id="IPR001909">
    <property type="entry name" value="KRAB"/>
</dbReference>
<dbReference type="InterPro" id="IPR036051">
    <property type="entry name" value="KRAB_dom_sf"/>
</dbReference>
<dbReference type="InterPro" id="IPR036236">
    <property type="entry name" value="Znf_C2H2_sf"/>
</dbReference>
<dbReference type="InterPro" id="IPR013087">
    <property type="entry name" value="Znf_C2H2_type"/>
</dbReference>
<dbReference type="PANTHER" id="PTHR24379">
    <property type="entry name" value="KRAB AND ZINC FINGER DOMAIN-CONTAINING"/>
    <property type="match status" value="1"/>
</dbReference>
<dbReference type="PANTHER" id="PTHR24379:SF120">
    <property type="entry name" value="ZINC FINGER PROTEIN 709"/>
    <property type="match status" value="1"/>
</dbReference>
<dbReference type="Pfam" id="PF01352">
    <property type="entry name" value="KRAB"/>
    <property type="match status" value="1"/>
</dbReference>
<dbReference type="Pfam" id="PF00096">
    <property type="entry name" value="zf-C2H2"/>
    <property type="match status" value="6"/>
</dbReference>
<dbReference type="Pfam" id="PF13894">
    <property type="entry name" value="zf-C2H2_4"/>
    <property type="match status" value="1"/>
</dbReference>
<dbReference type="SMART" id="SM00349">
    <property type="entry name" value="KRAB"/>
    <property type="match status" value="1"/>
</dbReference>
<dbReference type="SMART" id="SM00355">
    <property type="entry name" value="ZnF_C2H2"/>
    <property type="match status" value="11"/>
</dbReference>
<dbReference type="SUPFAM" id="SSF57667">
    <property type="entry name" value="beta-beta-alpha zinc fingers"/>
    <property type="match status" value="7"/>
</dbReference>
<dbReference type="SUPFAM" id="SSF109640">
    <property type="entry name" value="KRAB domain (Kruppel-associated box)"/>
    <property type="match status" value="1"/>
</dbReference>
<dbReference type="PROSITE" id="PS50805">
    <property type="entry name" value="KRAB"/>
    <property type="match status" value="1"/>
</dbReference>
<dbReference type="PROSITE" id="PS00028">
    <property type="entry name" value="ZINC_FINGER_C2H2_1"/>
    <property type="match status" value="10"/>
</dbReference>
<dbReference type="PROSITE" id="PS50157">
    <property type="entry name" value="ZINC_FINGER_C2H2_2"/>
    <property type="match status" value="12"/>
</dbReference>
<protein>
    <recommendedName>
        <fullName>Zinc finger protein 440</fullName>
    </recommendedName>
</protein>
<comment type="function">
    <text>May be involved in transcriptional regulation.</text>
</comment>
<comment type="interaction">
    <interactant intactId="EBI-726439">
        <id>Q8IYI8</id>
    </interactant>
    <interactant intactId="EBI-3866279">
        <id>Q9BWT7</id>
        <label>CARD10</label>
    </interactant>
    <organismsDiffer>false</organismsDiffer>
    <experiments>3</experiments>
</comment>
<comment type="interaction">
    <interactant intactId="EBI-726439">
        <id>Q8IYI8</id>
    </interactant>
    <interactant intactId="EBI-750020">
        <id>P49760</id>
        <label>CLK2</label>
    </interactant>
    <organismsDiffer>false</organismsDiffer>
    <experiments>3</experiments>
</comment>
<comment type="interaction">
    <interactant intactId="EBI-726439">
        <id>Q8IYI8</id>
    </interactant>
    <interactant intactId="EBI-347804">
        <id>P68400</id>
        <label>CSNK2A1</label>
    </interactant>
    <organismsDiffer>false</organismsDiffer>
    <experiments>3</experiments>
</comment>
<comment type="interaction">
    <interactant intactId="EBI-726439">
        <id>Q8IYI8</id>
    </interactant>
    <interactant intactId="EBI-3867333">
        <id>A8MQ03</id>
        <label>CYSRT1</label>
    </interactant>
    <organismsDiffer>false</organismsDiffer>
    <experiments>3</experiments>
</comment>
<comment type="interaction">
    <interactant intactId="EBI-726439">
        <id>Q8IYI8</id>
    </interactant>
    <interactant intactId="EBI-750641">
        <id>Q5TD97</id>
        <label>FHL5</label>
    </interactant>
    <organismsDiffer>false</organismsDiffer>
    <experiments>3</experiments>
</comment>
<comment type="interaction">
    <interactant intactId="EBI-726439">
        <id>Q8IYI8</id>
    </interactant>
    <interactant intactId="EBI-11959885">
        <id>Q07627</id>
        <label>KRTAP1-1</label>
    </interactant>
    <organismsDiffer>false</organismsDiffer>
    <experiments>3</experiments>
</comment>
<comment type="interaction">
    <interactant intactId="EBI-726439">
        <id>Q8IYI8</id>
    </interactant>
    <interactant intactId="EBI-11749135">
        <id>Q8IUG1</id>
        <label>KRTAP1-3</label>
    </interactant>
    <organismsDiffer>false</organismsDiffer>
    <experiments>3</experiments>
</comment>
<comment type="interaction">
    <interactant intactId="EBI-726439">
        <id>Q8IYI8</id>
    </interactant>
    <interactant intactId="EBI-10172150">
        <id>P60370</id>
        <label>KRTAP10-5</label>
    </interactant>
    <organismsDiffer>false</organismsDiffer>
    <experiments>3</experiments>
</comment>
<comment type="interaction">
    <interactant intactId="EBI-726439">
        <id>Q8IYI8</id>
    </interactant>
    <interactant intactId="EBI-12012928">
        <id>P60371</id>
        <label>KRTAP10-6</label>
    </interactant>
    <organismsDiffer>false</organismsDiffer>
    <experiments>3</experiments>
</comment>
<comment type="interaction">
    <interactant intactId="EBI-726439">
        <id>Q8IYI8</id>
    </interactant>
    <interactant intactId="EBI-10172290">
        <id>P60409</id>
        <label>KRTAP10-7</label>
    </interactant>
    <organismsDiffer>false</organismsDiffer>
    <experiments>3</experiments>
</comment>
<comment type="interaction">
    <interactant intactId="EBI-726439">
        <id>Q8IYI8</id>
    </interactant>
    <interactant intactId="EBI-10171774">
        <id>P60410</id>
        <label>KRTAP10-8</label>
    </interactant>
    <organismsDiffer>false</organismsDiffer>
    <experiments>3</experiments>
</comment>
<comment type="interaction">
    <interactant intactId="EBI-726439">
        <id>Q8IYI8</id>
    </interactant>
    <interactant intactId="EBI-10172052">
        <id>P60411</id>
        <label>KRTAP10-9</label>
    </interactant>
    <organismsDiffer>false</organismsDiffer>
    <experiments>6</experiments>
</comment>
<comment type="interaction">
    <interactant intactId="EBI-726439">
        <id>Q8IYI8</id>
    </interactant>
    <interactant intactId="EBI-11953334">
        <id>P60328</id>
        <label>KRTAP12-3</label>
    </interactant>
    <organismsDiffer>false</organismsDiffer>
    <experiments>3</experiments>
</comment>
<comment type="interaction">
    <interactant intactId="EBI-726439">
        <id>Q8IYI8</id>
    </interactant>
    <interactant intactId="EBI-14065470">
        <id>Q9BYR9</id>
        <label>KRTAP2-4</label>
    </interactant>
    <organismsDiffer>false</organismsDiffer>
    <experiments>3</experiments>
</comment>
<comment type="interaction">
    <interactant intactId="EBI-726439">
        <id>Q8IYI8</id>
    </interactant>
    <interactant intactId="EBI-11958132">
        <id>Q9BYR3</id>
        <label>KRTAP4-4</label>
    </interactant>
    <organismsDiffer>false</organismsDiffer>
    <experiments>3</experiments>
</comment>
<comment type="interaction">
    <interactant intactId="EBI-726439">
        <id>Q8IYI8</id>
    </interactant>
    <interactant intactId="EBI-11987425">
        <id>Q6L8G8</id>
        <label>KRTAP5-7</label>
    </interactant>
    <organismsDiffer>false</organismsDiffer>
    <experiments>3</experiments>
</comment>
<comment type="interaction">
    <interactant intactId="EBI-726439">
        <id>Q8IYI8</id>
    </interactant>
    <interactant intactId="EBI-3958099">
        <id>P26371</id>
        <label>KRTAP5-9</label>
    </interactant>
    <organismsDiffer>false</organismsDiffer>
    <experiments>3</experiments>
</comment>
<comment type="interaction">
    <interactant intactId="EBI-726439">
        <id>Q8IYI8</id>
    </interactant>
    <interactant intactId="EBI-1043191">
        <id>Q9BYQ3</id>
        <label>KRTAP9-3</label>
    </interactant>
    <organismsDiffer>false</organismsDiffer>
    <experiments>3</experiments>
</comment>
<comment type="interaction">
    <interactant intactId="EBI-726439">
        <id>Q8IYI8</id>
    </interactant>
    <interactant intactId="EBI-724076">
        <id>Q99750</id>
        <label>MDFI</label>
    </interactant>
    <organismsDiffer>false</organismsDiffer>
    <experiments>10</experiments>
</comment>
<comment type="interaction">
    <interactant intactId="EBI-726439">
        <id>Q8IYI8</id>
    </interactant>
    <interactant intactId="EBI-10172526">
        <id>Q9UJV3-2</id>
        <label>MID2</label>
    </interactant>
    <organismsDiffer>false</organismsDiffer>
    <experiments>6</experiments>
</comment>
<comment type="interaction">
    <interactant intactId="EBI-726439">
        <id>Q8IYI8</id>
    </interactant>
    <interactant intactId="EBI-742948">
        <id>Q5JR59</id>
        <label>MTUS2</label>
    </interactant>
    <organismsDiffer>false</organismsDiffer>
    <experiments>3</experiments>
</comment>
<comment type="interaction">
    <interactant intactId="EBI-726439">
        <id>Q8IYI8</id>
    </interactant>
    <interactant intactId="EBI-11522433">
        <id>Q5JR59-3</id>
        <label>MTUS2</label>
    </interactant>
    <organismsDiffer>false</organismsDiffer>
    <experiments>3</experiments>
</comment>
<comment type="interaction">
    <interactant intactId="EBI-726439">
        <id>Q8IYI8</id>
    </interactant>
    <interactant intactId="EBI-945833">
        <id>Q7Z3S9</id>
        <label>NOTCH2NLA</label>
    </interactant>
    <organismsDiffer>false</organismsDiffer>
    <experiments>3</experiments>
</comment>
<comment type="interaction">
    <interactant intactId="EBI-726439">
        <id>Q8IYI8</id>
    </interactant>
    <interactant intactId="EBI-22310682">
        <id>P0DPK4</id>
        <label>NOTCH2NLC</label>
    </interactant>
    <organismsDiffer>false</organismsDiffer>
    <experiments>3</experiments>
</comment>
<comment type="interaction">
    <interactant intactId="EBI-726439">
        <id>Q8IYI8</id>
    </interactant>
    <interactant intactId="EBI-712466">
        <id>Q16623</id>
        <label>STX1A</label>
    </interactant>
    <organismsDiffer>false</organismsDiffer>
    <experiments>3</experiments>
</comment>
<comment type="interaction">
    <interactant intactId="EBI-726439">
        <id>Q8IYI8</id>
    </interactant>
    <interactant intactId="EBI-359224">
        <id>Q13077</id>
        <label>TRAF1</label>
    </interactant>
    <organismsDiffer>false</organismsDiffer>
    <experiments>7</experiments>
</comment>
<comment type="interaction">
    <interactant intactId="EBI-726439">
        <id>Q8IYI8</id>
    </interactant>
    <interactant intactId="EBI-720609">
        <id>O76024</id>
        <label>WFS1</label>
    </interactant>
    <organismsDiffer>false</organismsDiffer>
    <experiments>3</experiments>
</comment>
<comment type="interaction">
    <interactant intactId="EBI-726439">
        <id>Q8IYI8</id>
    </interactant>
    <interactant intactId="EBI-373456">
        <id>Q9Y3S2</id>
        <label>ZNF330</label>
    </interactant>
    <organismsDiffer>false</organismsDiffer>
    <experiments>3</experiments>
</comment>
<comment type="subcellular location">
    <subcellularLocation>
        <location evidence="4">Nucleus</location>
    </subcellularLocation>
</comment>
<comment type="similarity">
    <text evidence="4">Belongs to the krueppel C2H2-type zinc-finger protein family.</text>
</comment>
<gene>
    <name type="primary">ZNF440</name>
</gene>
<sequence>MDPVAFKDVAVNFTQEEWALLDISQRKLYREVMLETFRNLTSLGKRWKDQNIEYEHQNPRRNFRSLIEEKVNEIKDDSHCGETFTPVPDDRLNFQEKKASPEVKSCESFVCGEVGLGNSSFNMNIRGDIGHKAYEYQEYGPKPCKCQQPKKAFRYRPSFRTQERDHTGEKPNACKVCGKTFISHSSVRRHMVMHSGDGPYKCKFCGKAFHCLRLYLIHERIHTGEKPCECKQCGKSFSYSATHRIHKRTHTGEKPYEYQECGKAFHSPRSYRRHERIHMGEKAYQCKECGKAFTCPRYVRIHERTHSRKNLYECKQCGKALSSLTSFQTHVRLHSGERPYECKICGKDFCSVNSFQRHEKIHSGEKPYKCKQCGKAFPHSSSLRYHERTHTGEKPYECKQCGKAFRSASHLRVHGRTHTGEKPYECKECGKAFRYVNNLQSHERTQTHIRIHSGERRYKCKICGKGFYCPKSFQRHEKTHTGEKLYECKQRSVVPSVVPVPFDIMKGLTLERSPINASNVGKPSELCQSFECMVGLTLKRNPMSVSNDGKPSDLPHTFEYVVGHTMERSPMHVRNVGNPSDLPRTFEFMKGHKHT</sequence>
<proteinExistence type="evidence at protein level"/>
<keyword id="KW-0238">DNA-binding</keyword>
<keyword id="KW-0479">Metal-binding</keyword>
<keyword id="KW-0539">Nucleus</keyword>
<keyword id="KW-1267">Proteomics identification</keyword>
<keyword id="KW-1185">Reference proteome</keyword>
<keyword id="KW-0677">Repeat</keyword>
<keyword id="KW-0804">Transcription</keyword>
<keyword id="KW-0805">Transcription regulation</keyword>
<keyword id="KW-0862">Zinc</keyword>
<keyword id="KW-0863">Zinc-finger</keyword>
<reference key="1">
    <citation type="journal article" date="2004" name="Nat. Genet.">
        <title>Complete sequencing and characterization of 21,243 full-length human cDNAs.</title>
        <authorList>
            <person name="Ota T."/>
            <person name="Suzuki Y."/>
            <person name="Nishikawa T."/>
            <person name="Otsuki T."/>
            <person name="Sugiyama T."/>
            <person name="Irie R."/>
            <person name="Wakamatsu A."/>
            <person name="Hayashi K."/>
            <person name="Sato H."/>
            <person name="Nagai K."/>
            <person name="Kimura K."/>
            <person name="Makita H."/>
            <person name="Sekine M."/>
            <person name="Obayashi M."/>
            <person name="Nishi T."/>
            <person name="Shibahara T."/>
            <person name="Tanaka T."/>
            <person name="Ishii S."/>
            <person name="Yamamoto J."/>
            <person name="Saito K."/>
            <person name="Kawai Y."/>
            <person name="Isono Y."/>
            <person name="Nakamura Y."/>
            <person name="Nagahari K."/>
            <person name="Murakami K."/>
            <person name="Yasuda T."/>
            <person name="Iwayanagi T."/>
            <person name="Wagatsuma M."/>
            <person name="Shiratori A."/>
            <person name="Sudo H."/>
            <person name="Hosoiri T."/>
            <person name="Kaku Y."/>
            <person name="Kodaira H."/>
            <person name="Kondo H."/>
            <person name="Sugawara M."/>
            <person name="Takahashi M."/>
            <person name="Kanda K."/>
            <person name="Yokoi T."/>
            <person name="Furuya T."/>
            <person name="Kikkawa E."/>
            <person name="Omura Y."/>
            <person name="Abe K."/>
            <person name="Kamihara K."/>
            <person name="Katsuta N."/>
            <person name="Sato K."/>
            <person name="Tanikawa M."/>
            <person name="Yamazaki M."/>
            <person name="Ninomiya K."/>
            <person name="Ishibashi T."/>
            <person name="Yamashita H."/>
            <person name="Murakawa K."/>
            <person name="Fujimori K."/>
            <person name="Tanai H."/>
            <person name="Kimata M."/>
            <person name="Watanabe M."/>
            <person name="Hiraoka S."/>
            <person name="Chiba Y."/>
            <person name="Ishida S."/>
            <person name="Ono Y."/>
            <person name="Takiguchi S."/>
            <person name="Watanabe S."/>
            <person name="Yosida M."/>
            <person name="Hotuta T."/>
            <person name="Kusano J."/>
            <person name="Kanehori K."/>
            <person name="Takahashi-Fujii A."/>
            <person name="Hara H."/>
            <person name="Tanase T.-O."/>
            <person name="Nomura Y."/>
            <person name="Togiya S."/>
            <person name="Komai F."/>
            <person name="Hara R."/>
            <person name="Takeuchi K."/>
            <person name="Arita M."/>
            <person name="Imose N."/>
            <person name="Musashino K."/>
            <person name="Yuuki H."/>
            <person name="Oshima A."/>
            <person name="Sasaki N."/>
            <person name="Aotsuka S."/>
            <person name="Yoshikawa Y."/>
            <person name="Matsunawa H."/>
            <person name="Ichihara T."/>
            <person name="Shiohata N."/>
            <person name="Sano S."/>
            <person name="Moriya S."/>
            <person name="Momiyama H."/>
            <person name="Satoh N."/>
            <person name="Takami S."/>
            <person name="Terashima Y."/>
            <person name="Suzuki O."/>
            <person name="Nakagawa S."/>
            <person name="Senoh A."/>
            <person name="Mizoguchi H."/>
            <person name="Goto Y."/>
            <person name="Shimizu F."/>
            <person name="Wakebe H."/>
            <person name="Hishigaki H."/>
            <person name="Watanabe T."/>
            <person name="Sugiyama A."/>
            <person name="Takemoto M."/>
            <person name="Kawakami B."/>
            <person name="Yamazaki M."/>
            <person name="Watanabe K."/>
            <person name="Kumagai A."/>
            <person name="Itakura S."/>
            <person name="Fukuzumi Y."/>
            <person name="Fujimori Y."/>
            <person name="Komiyama M."/>
            <person name="Tashiro H."/>
            <person name="Tanigami A."/>
            <person name="Fujiwara T."/>
            <person name="Ono T."/>
            <person name="Yamada K."/>
            <person name="Fujii Y."/>
            <person name="Ozaki K."/>
            <person name="Hirao M."/>
            <person name="Ohmori Y."/>
            <person name="Kawabata A."/>
            <person name="Hikiji T."/>
            <person name="Kobatake N."/>
            <person name="Inagaki H."/>
            <person name="Ikema Y."/>
            <person name="Okamoto S."/>
            <person name="Okitani R."/>
            <person name="Kawakami T."/>
            <person name="Noguchi S."/>
            <person name="Itoh T."/>
            <person name="Shigeta K."/>
            <person name="Senba T."/>
            <person name="Matsumura K."/>
            <person name="Nakajima Y."/>
            <person name="Mizuno T."/>
            <person name="Morinaga M."/>
            <person name="Sasaki M."/>
            <person name="Togashi T."/>
            <person name="Oyama M."/>
            <person name="Hata H."/>
            <person name="Watanabe M."/>
            <person name="Komatsu T."/>
            <person name="Mizushima-Sugano J."/>
            <person name="Satoh T."/>
            <person name="Shirai Y."/>
            <person name="Takahashi Y."/>
            <person name="Nakagawa K."/>
            <person name="Okumura K."/>
            <person name="Nagase T."/>
            <person name="Nomura N."/>
            <person name="Kikuchi H."/>
            <person name="Masuho Y."/>
            <person name="Yamashita R."/>
            <person name="Nakai K."/>
            <person name="Yada T."/>
            <person name="Nakamura Y."/>
            <person name="Ohara O."/>
            <person name="Isogai T."/>
            <person name="Sugano S."/>
        </authorList>
    </citation>
    <scope>NUCLEOTIDE SEQUENCE [LARGE SCALE MRNA]</scope>
    <scope>VARIANT ASN-569</scope>
    <source>
        <tissue>Tongue</tissue>
    </source>
</reference>
<reference key="2">
    <citation type="journal article" date="2004" name="Genome Res.">
        <title>The status, quality, and expansion of the NIH full-length cDNA project: the Mammalian Gene Collection (MGC).</title>
        <authorList>
            <consortium name="The MGC Project Team"/>
        </authorList>
    </citation>
    <scope>NUCLEOTIDE SEQUENCE [LARGE SCALE MRNA]</scope>
    <source>
        <tissue>Uterus</tissue>
    </source>
</reference>
<accession>Q8IYI8</accession>
<accession>Q8N1R9</accession>
<organism>
    <name type="scientific">Homo sapiens</name>
    <name type="common">Human</name>
    <dbReference type="NCBI Taxonomy" id="9606"/>
    <lineage>
        <taxon>Eukaryota</taxon>
        <taxon>Metazoa</taxon>
        <taxon>Chordata</taxon>
        <taxon>Craniata</taxon>
        <taxon>Vertebrata</taxon>
        <taxon>Euteleostomi</taxon>
        <taxon>Mammalia</taxon>
        <taxon>Eutheria</taxon>
        <taxon>Euarchontoglires</taxon>
        <taxon>Primates</taxon>
        <taxon>Haplorrhini</taxon>
        <taxon>Catarrhini</taxon>
        <taxon>Hominidae</taxon>
        <taxon>Homo</taxon>
    </lineage>
</organism>
<name>ZN440_HUMAN</name>